<gene>
    <name type="primary">sdrD</name>
    <name type="ordered locus">SAV0562</name>
</gene>
<protein>
    <recommendedName>
        <fullName>Serine-aspartate repeat-containing protein D</fullName>
    </recommendedName>
</protein>
<feature type="signal peptide" evidence="2">
    <location>
        <begin position="1"/>
        <end position="35"/>
    </location>
</feature>
<feature type="chain" id="PRO_0000281208" description="Serine-aspartate repeat-containing protein D">
    <location>
        <begin position="36"/>
        <end position="1351"/>
    </location>
</feature>
<feature type="propeptide" id="PRO_0000281209" description="Removed by sortase" evidence="3">
    <location>
        <begin position="1352"/>
        <end position="1385"/>
    </location>
</feature>
<feature type="domain" description="CNA-B 1">
    <location>
        <begin position="569"/>
        <end position="680"/>
    </location>
</feature>
<feature type="domain" description="CNA-B 2">
    <location>
        <begin position="681"/>
        <end position="791"/>
    </location>
</feature>
<feature type="domain" description="CNA-B 3">
    <location>
        <begin position="792"/>
        <end position="901"/>
    </location>
</feature>
<feature type="domain" description="CNA-B 4">
    <location>
        <begin position="902"/>
        <end position="1012"/>
    </location>
</feature>
<feature type="domain" description="CNA-B 5">
    <location>
        <begin position="1013"/>
        <end position="1123"/>
    </location>
</feature>
<feature type="region of interest" description="Ligand binding A region">
    <location>
        <begin position="36"/>
        <end position="568"/>
    </location>
</feature>
<feature type="region of interest" description="Disordered" evidence="4">
    <location>
        <begin position="54"/>
        <end position="162"/>
    </location>
</feature>
<feature type="region of interest" description="Disordered" evidence="4">
    <location>
        <begin position="200"/>
        <end position="224"/>
    </location>
</feature>
<feature type="region of interest" description="Disordered" evidence="4">
    <location>
        <begin position="856"/>
        <end position="886"/>
    </location>
</feature>
<feature type="region of interest" description="Disordered" evidence="4">
    <location>
        <begin position="972"/>
        <end position="992"/>
    </location>
</feature>
<feature type="region of interest" description="Disordered" evidence="4">
    <location>
        <begin position="1077"/>
        <end position="1361"/>
    </location>
</feature>
<feature type="short sequence motif" description="YSIRK-G/S signaling motif" evidence="1">
    <location>
        <begin position="23"/>
        <end position="34"/>
    </location>
</feature>
<feature type="short sequence motif" description="LPXTG sorting signal" evidence="3">
    <location>
        <begin position="1348"/>
        <end position="1352"/>
    </location>
</feature>
<feature type="compositionally biased region" description="Polar residues" evidence="4">
    <location>
        <begin position="62"/>
        <end position="71"/>
    </location>
</feature>
<feature type="compositionally biased region" description="Polar residues" evidence="4">
    <location>
        <begin position="94"/>
        <end position="109"/>
    </location>
</feature>
<feature type="compositionally biased region" description="Basic and acidic residues" evidence="4">
    <location>
        <begin position="130"/>
        <end position="145"/>
    </location>
</feature>
<feature type="compositionally biased region" description="Polar residues" evidence="4">
    <location>
        <begin position="146"/>
        <end position="155"/>
    </location>
</feature>
<feature type="compositionally biased region" description="Low complexity" evidence="4">
    <location>
        <begin position="205"/>
        <end position="214"/>
    </location>
</feature>
<feature type="compositionally biased region" description="Polar residues" evidence="4">
    <location>
        <begin position="860"/>
        <end position="869"/>
    </location>
</feature>
<feature type="compositionally biased region" description="Polar residues" evidence="4">
    <location>
        <begin position="972"/>
        <end position="981"/>
    </location>
</feature>
<feature type="compositionally biased region" description="Low complexity" evidence="4">
    <location>
        <begin position="1081"/>
        <end position="1090"/>
    </location>
</feature>
<feature type="compositionally biased region" description="Acidic residues" evidence="4">
    <location>
        <begin position="1091"/>
        <end position="1101"/>
    </location>
</feature>
<feature type="compositionally biased region" description="Acidic residues" evidence="4">
    <location>
        <begin position="1118"/>
        <end position="1324"/>
    </location>
</feature>
<feature type="modified residue" description="Pentaglycyl murein peptidoglycan amidated threonine" evidence="3">
    <location>
        <position position="1351"/>
    </location>
</feature>
<feature type="helix" evidence="6">
    <location>
        <begin position="248"/>
        <end position="250"/>
    </location>
</feature>
<feature type="strand" evidence="6">
    <location>
        <begin position="251"/>
        <end position="260"/>
    </location>
</feature>
<feature type="strand" evidence="6">
    <location>
        <begin position="266"/>
        <end position="268"/>
    </location>
</feature>
<feature type="turn" evidence="6">
    <location>
        <begin position="270"/>
        <end position="272"/>
    </location>
</feature>
<feature type="strand" evidence="6">
    <location>
        <begin position="274"/>
        <end position="283"/>
    </location>
</feature>
<feature type="strand" evidence="6">
    <location>
        <begin position="292"/>
        <end position="297"/>
    </location>
</feature>
<feature type="strand" evidence="6">
    <location>
        <begin position="301"/>
        <end position="303"/>
    </location>
</feature>
<feature type="helix" evidence="6">
    <location>
        <begin position="308"/>
        <end position="313"/>
    </location>
</feature>
<feature type="turn" evidence="6">
    <location>
        <begin position="320"/>
        <end position="322"/>
    </location>
</feature>
<feature type="strand" evidence="6">
    <location>
        <begin position="325"/>
        <end position="332"/>
    </location>
</feature>
<feature type="helix" evidence="6">
    <location>
        <begin position="333"/>
        <end position="335"/>
    </location>
</feature>
<feature type="strand" evidence="6">
    <location>
        <begin position="337"/>
        <end position="342"/>
    </location>
</feature>
<feature type="helix" evidence="6">
    <location>
        <begin position="345"/>
        <end position="348"/>
    </location>
</feature>
<feature type="strand" evidence="6">
    <location>
        <begin position="353"/>
        <end position="362"/>
    </location>
</feature>
<feature type="helix" evidence="6">
    <location>
        <begin position="364"/>
        <end position="366"/>
    </location>
</feature>
<feature type="strand" evidence="6">
    <location>
        <begin position="371"/>
        <end position="380"/>
    </location>
</feature>
<feature type="strand" evidence="6">
    <location>
        <begin position="383"/>
        <end position="391"/>
    </location>
</feature>
<feature type="strand" evidence="6">
    <location>
        <begin position="397"/>
        <end position="399"/>
    </location>
</feature>
<feature type="strand" evidence="6">
    <location>
        <begin position="402"/>
        <end position="413"/>
    </location>
</feature>
<feature type="strand" evidence="6">
    <location>
        <begin position="422"/>
        <end position="431"/>
    </location>
</feature>
<feature type="strand" evidence="6">
    <location>
        <begin position="437"/>
        <end position="446"/>
    </location>
</feature>
<feature type="turn" evidence="6">
    <location>
        <begin position="460"/>
        <end position="462"/>
    </location>
</feature>
<feature type="strand" evidence="6">
    <location>
        <begin position="464"/>
        <end position="469"/>
    </location>
</feature>
<feature type="helix" evidence="6">
    <location>
        <begin position="484"/>
        <end position="486"/>
    </location>
</feature>
<feature type="strand" evidence="6">
    <location>
        <begin position="487"/>
        <end position="489"/>
    </location>
</feature>
<feature type="helix" evidence="6">
    <location>
        <begin position="491"/>
        <end position="494"/>
    </location>
</feature>
<feature type="strand" evidence="6">
    <location>
        <begin position="495"/>
        <end position="501"/>
    </location>
</feature>
<feature type="turn" evidence="6">
    <location>
        <begin position="502"/>
        <end position="504"/>
    </location>
</feature>
<feature type="strand" evidence="6">
    <location>
        <begin position="505"/>
        <end position="513"/>
    </location>
</feature>
<feature type="strand" evidence="6">
    <location>
        <begin position="517"/>
        <end position="524"/>
    </location>
</feature>
<feature type="strand" evidence="6">
    <location>
        <begin position="534"/>
        <end position="542"/>
    </location>
</feature>
<feature type="strand" evidence="6">
    <location>
        <begin position="549"/>
        <end position="556"/>
    </location>
</feature>
<feature type="strand" evidence="6">
    <location>
        <begin position="570"/>
        <end position="578"/>
    </location>
</feature>
<feature type="strand" evidence="6">
    <location>
        <begin position="583"/>
        <end position="585"/>
    </location>
</feature>
<feature type="strand" evidence="6">
    <location>
        <begin position="597"/>
        <end position="602"/>
    </location>
</feature>
<feature type="turn" evidence="6">
    <location>
        <begin position="603"/>
        <end position="606"/>
    </location>
</feature>
<feature type="strand" evidence="6">
    <location>
        <begin position="607"/>
        <end position="613"/>
    </location>
</feature>
<feature type="strand" evidence="6">
    <location>
        <begin position="618"/>
        <end position="625"/>
    </location>
</feature>
<feature type="strand" evidence="6">
    <location>
        <begin position="627"/>
        <end position="635"/>
    </location>
</feature>
<feature type="turn" evidence="6">
    <location>
        <begin position="652"/>
        <end position="654"/>
    </location>
</feature>
<feature type="strand" evidence="6">
    <location>
        <begin position="659"/>
        <end position="665"/>
    </location>
</feature>
<feature type="strand" evidence="6">
    <location>
        <begin position="670"/>
        <end position="678"/>
    </location>
</feature>
<keyword id="KW-0002">3D-structure</keyword>
<keyword id="KW-0106">Calcium</keyword>
<keyword id="KW-0134">Cell wall</keyword>
<keyword id="KW-0572">Peptidoglycan-anchor</keyword>
<keyword id="KW-0677">Repeat</keyword>
<keyword id="KW-0964">Secreted</keyword>
<keyword id="KW-0732">Signal</keyword>
<sequence length="1385" mass="149644">MLNRENKTAITRKGMVSNRLNKFSIRKYTVGTASILVGTTLIFGLGNQEAKAAESTNKELNEATTSASDNQSSDKVDMQQLNQEDNTKNDNQKEMVSSQGNETTSNGNKSIEKESVQSTTGNKVEVSTAKSDEQASPKSTNEDLNTKQTISNQEGLQPDLLENKSVVNVQPTNEENKKVDAKTESTTLNVKSDAIKSNAETLVDNNSNSNNENNADIILPKSTAPKSLNTRMRMAAIQPNSTDSKNVNDLITSNTTLTVVDADNSKTIVPAQDYLSLKSQITVDDKVKSGDYFTIKYSDTVQVYGLNPEDIKNIGDIKDPNNGETIATAKHDTANNLITYTFTDYVDRFNSVKMGINYSIYMDADTIPVDKKDVPFSVTIGNQITTTTADITYPAYKEADNNSIGSAFTETVSHVGNVEDPGYYNQVVYVNPMDKDLKGAKLKVEAYHPKYPTNIGQINQNVTNIKIYRVPEGYTLNKGYDVNTNDLVDVTDEFKNKMTYGSNQSVNLDFGDITSAYVVMVNTKFQYTNSESPTLVQMATLSSTGNKSVSTGNALGFTNNQSGGAGQEVYKIGNYVWEDTNKNGVQELGEKGVGNVTVTVFDNNTNTKVGEAVTKEDGSYLIPNLPNGDYRVEFSNLPKGYEVTPSKQGNNEELDSNGLSSVITVNGKDNLSADLGIYKPKYNLGDYVWEDTNKNGIQDQDEKGISGVTVTLKDENGNVLKTVTTDADGKYKFTDLDNGNYKVEFTTPEGYTPTTVTSGSDIEKDSNGLTTTGVINGADNMTLDSGFYKTPKYNLGNYVWEDTNKDGKQDSTEKGISGVTVTLKNENGEVLQTTKTDKDGKYQFTGLENGTYKVEFETPSGYTPTQVGSGTDEGIDSNGTSTTGVIKDKDNDTIDSGFYKPTYNLGDYVWEDTNKNGVQDKDEKGISGVTVTLKDENDKVLKTVTTDENGKYQFTDLNNGTYKVEFETPSGYTPTSVTSGNDTEKDSNGLTTTGVIKDADNMTLDSGFYKTPKYSLGDYVWYDSNKDGKQDSTEKGIKDVKVILLNEKGEVIGTTKTDENGKYRFDNLDSGKYKVIFEKPTGLTQTGTNTTEDDKDADGGEVDVTITDHDDFTLDNGYYEEETSDSDSDSDSDSDSDSDSDSDSDSDSDSDSDSDSDSDSDSDSDSDSDSDSDSDSDSDSDSDSDSDSDSDSDSDSDSDSDSDSDSDSDSDSDSDSDSDSDSDSDSDSDSDSDSDSDSDSDSDSDSDSDSDSDSDSDSDSDSDSDSDSDSDSDSDSDSDSDSDSDSDSDSDSDSDSDSDSDSDSDSDSDSDSDSDSDSDSDSDSDAGKHTPVKPMSTTKDHHNKAKALPETGNENSGSNNATLFGGLFAALGSLLLFGRRKKQNK</sequence>
<comment type="function">
    <text evidence="1">Cell surface-associated calcium-binding protein which plays an important role in adhesion and pathogenesis. Mediates interactions with components of the extracellular matrix such as host DSG1 to promote bacterial adhesion to host cells. Contributes to the resistance to killing by innate immune components such as neutrophils present in blood and thus attenuates bacterial clearance.</text>
</comment>
<comment type="subunit">
    <text evidence="1">Interacts with host DSG1; this interaction increases S.aureus adherence to keratinocytes.</text>
</comment>
<comment type="subcellular location">
    <subcellularLocation>
        <location evidence="3">Secreted</location>
        <location evidence="3">Cell wall</location>
        <topology evidence="3">Peptidoglycan-anchor</topology>
    </subcellularLocation>
    <text evidence="1">Anchored to the cell wall by sortase A (By similarity).</text>
</comment>
<comment type="similarity">
    <text evidence="5">Belongs to the serine-aspartate repeat-containing protein (SDr) family.</text>
</comment>
<organism>
    <name type="scientific">Staphylococcus aureus (strain Mu50 / ATCC 700699)</name>
    <dbReference type="NCBI Taxonomy" id="158878"/>
    <lineage>
        <taxon>Bacteria</taxon>
        <taxon>Bacillati</taxon>
        <taxon>Bacillota</taxon>
        <taxon>Bacilli</taxon>
        <taxon>Bacillales</taxon>
        <taxon>Staphylococcaceae</taxon>
        <taxon>Staphylococcus</taxon>
    </lineage>
</organism>
<evidence type="ECO:0000250" key="1">
    <source>
        <dbReference type="UniProtKB" id="Q2G0L4"/>
    </source>
</evidence>
<evidence type="ECO:0000255" key="2"/>
<evidence type="ECO:0000255" key="3">
    <source>
        <dbReference type="PROSITE-ProRule" id="PRU00477"/>
    </source>
</evidence>
<evidence type="ECO:0000256" key="4">
    <source>
        <dbReference type="SAM" id="MobiDB-lite"/>
    </source>
</evidence>
<evidence type="ECO:0000305" key="5"/>
<evidence type="ECO:0007829" key="6">
    <source>
        <dbReference type="PDB" id="8VDK"/>
    </source>
</evidence>
<proteinExistence type="evidence at protein level"/>
<dbReference type="EMBL" id="BA000017">
    <property type="protein sequence ID" value="BAB56724.1"/>
    <property type="molecule type" value="Genomic_DNA"/>
</dbReference>
<dbReference type="RefSeq" id="WP_000934467.1">
    <property type="nucleotide sequence ID" value="NC_002758.2"/>
</dbReference>
<dbReference type="PDB" id="8VDK">
    <property type="method" value="X-ray"/>
    <property type="resolution" value="1.80 A"/>
    <property type="chains" value="A=244-687"/>
</dbReference>
<dbReference type="PDBsum" id="8VDK"/>
<dbReference type="SMR" id="Q99W47"/>
<dbReference type="KEGG" id="sav:SAV0562"/>
<dbReference type="HOGENOM" id="CLU_004137_0_1_9"/>
<dbReference type="PhylomeDB" id="Q99W47"/>
<dbReference type="PRO" id="PR:Q99W47"/>
<dbReference type="Proteomes" id="UP000002481">
    <property type="component" value="Chromosome"/>
</dbReference>
<dbReference type="GO" id="GO:0005576">
    <property type="term" value="C:extracellular region"/>
    <property type="evidence" value="ECO:0007669"/>
    <property type="project" value="UniProtKB-KW"/>
</dbReference>
<dbReference type="GO" id="GO:0007155">
    <property type="term" value="P:cell adhesion"/>
    <property type="evidence" value="ECO:0007669"/>
    <property type="project" value="InterPro"/>
</dbReference>
<dbReference type="Gene3D" id="2.60.40.1280">
    <property type="match status" value="1"/>
</dbReference>
<dbReference type="Gene3D" id="2.60.40.1290">
    <property type="match status" value="1"/>
</dbReference>
<dbReference type="Gene3D" id="2.60.40.10">
    <property type="entry name" value="Immunoglobulins"/>
    <property type="match status" value="5"/>
</dbReference>
<dbReference type="InterPro" id="IPR011266">
    <property type="entry name" value="Adhesin_Fg-bd_dom_2"/>
</dbReference>
<dbReference type="InterPro" id="IPR008966">
    <property type="entry name" value="Adhesion_dom_sf"/>
</dbReference>
<dbReference type="InterPro" id="IPR011252">
    <property type="entry name" value="Fibrogen-bd_dom1"/>
</dbReference>
<dbReference type="InterPro" id="IPR013783">
    <property type="entry name" value="Ig-like_fold"/>
</dbReference>
<dbReference type="InterPro" id="IPR019931">
    <property type="entry name" value="LPXTG_anchor"/>
</dbReference>
<dbReference type="InterPro" id="IPR050972">
    <property type="entry name" value="SDr-like"/>
</dbReference>
<dbReference type="InterPro" id="IPR033764">
    <property type="entry name" value="Sdr_B"/>
</dbReference>
<dbReference type="InterPro" id="IPR041171">
    <property type="entry name" value="SDR_Ig"/>
</dbReference>
<dbReference type="InterPro" id="IPR005877">
    <property type="entry name" value="YSIRK_signal_dom"/>
</dbReference>
<dbReference type="NCBIfam" id="TIGR01167">
    <property type="entry name" value="LPXTG_anchor"/>
    <property type="match status" value="1"/>
</dbReference>
<dbReference type="NCBIfam" id="NF012181">
    <property type="entry name" value="MSCRAMM_SdrD"/>
    <property type="match status" value="1"/>
</dbReference>
<dbReference type="NCBIfam" id="TIGR01168">
    <property type="entry name" value="YSIRK_signal"/>
    <property type="match status" value="1"/>
</dbReference>
<dbReference type="PANTHER" id="PTHR34403">
    <property type="entry name" value="TOL-PAL SYSTEM PROTEIN TOLA"/>
    <property type="match status" value="1"/>
</dbReference>
<dbReference type="PANTHER" id="PTHR34403:SF8">
    <property type="entry name" value="TOL-PAL SYSTEM PROTEIN TOLA"/>
    <property type="match status" value="1"/>
</dbReference>
<dbReference type="Pfam" id="PF17961">
    <property type="entry name" value="Big_8"/>
    <property type="match status" value="1"/>
</dbReference>
<dbReference type="Pfam" id="PF00746">
    <property type="entry name" value="Gram_pos_anchor"/>
    <property type="match status" value="1"/>
</dbReference>
<dbReference type="Pfam" id="PF17210">
    <property type="entry name" value="SdrD_B"/>
    <property type="match status" value="5"/>
</dbReference>
<dbReference type="Pfam" id="PF10425">
    <property type="entry name" value="SdrG_C_C"/>
    <property type="match status" value="1"/>
</dbReference>
<dbReference type="Pfam" id="PF04650">
    <property type="entry name" value="YSIRK_signal"/>
    <property type="match status" value="1"/>
</dbReference>
<dbReference type="SUPFAM" id="SSF49401">
    <property type="entry name" value="Bacterial adhesins"/>
    <property type="match status" value="2"/>
</dbReference>
<dbReference type="SUPFAM" id="SSF117074">
    <property type="entry name" value="Hypothetical protein PA1324"/>
    <property type="match status" value="5"/>
</dbReference>
<dbReference type="PROSITE" id="PS50847">
    <property type="entry name" value="GRAM_POS_ANCHORING"/>
    <property type="match status" value="1"/>
</dbReference>
<reference key="1">
    <citation type="journal article" date="2001" name="Lancet">
        <title>Whole genome sequencing of meticillin-resistant Staphylococcus aureus.</title>
        <authorList>
            <person name="Kuroda M."/>
            <person name="Ohta T."/>
            <person name="Uchiyama I."/>
            <person name="Baba T."/>
            <person name="Yuzawa H."/>
            <person name="Kobayashi I."/>
            <person name="Cui L."/>
            <person name="Oguchi A."/>
            <person name="Aoki K."/>
            <person name="Nagai Y."/>
            <person name="Lian J.-Q."/>
            <person name="Ito T."/>
            <person name="Kanamori M."/>
            <person name="Matsumaru H."/>
            <person name="Maruyama A."/>
            <person name="Murakami H."/>
            <person name="Hosoyama A."/>
            <person name="Mizutani-Ui Y."/>
            <person name="Takahashi N.K."/>
            <person name="Sawano T."/>
            <person name="Inoue R."/>
            <person name="Kaito C."/>
            <person name="Sekimizu K."/>
            <person name="Hirakawa H."/>
            <person name="Kuhara S."/>
            <person name="Goto S."/>
            <person name="Yabuzaki J."/>
            <person name="Kanehisa M."/>
            <person name="Yamashita A."/>
            <person name="Oshima K."/>
            <person name="Furuya K."/>
            <person name="Yoshino C."/>
            <person name="Shiba T."/>
            <person name="Hattori M."/>
            <person name="Ogasawara N."/>
            <person name="Hayashi H."/>
            <person name="Hiramatsu K."/>
        </authorList>
    </citation>
    <scope>NUCLEOTIDE SEQUENCE [LARGE SCALE GENOMIC DNA]</scope>
    <source>
        <strain>Mu50 / ATCC 700699</strain>
    </source>
</reference>
<name>SDRD_STAAM</name>
<accession>Q99W47</accession>